<keyword id="KW-0002">3D-structure</keyword>
<keyword id="KW-0067">ATP-binding</keyword>
<keyword id="KW-0418">Kinase</keyword>
<keyword id="KW-0547">Nucleotide-binding</keyword>
<keyword id="KW-1267">Proteomics identification</keyword>
<keyword id="KW-1185">Reference proteome</keyword>
<keyword id="KW-0677">Repeat</keyword>
<keyword id="KW-0723">Serine/threonine-protein kinase</keyword>
<keyword id="KW-0808">Transferase</keyword>
<gene>
    <name type="primary">ULK4</name>
</gene>
<name>ULK4_HUMAN</name>
<reference key="1">
    <citation type="journal article" date="2004" name="Nat. Genet.">
        <title>Complete sequencing and characterization of 21,243 full-length human cDNAs.</title>
        <authorList>
            <person name="Ota T."/>
            <person name="Suzuki Y."/>
            <person name="Nishikawa T."/>
            <person name="Otsuki T."/>
            <person name="Sugiyama T."/>
            <person name="Irie R."/>
            <person name="Wakamatsu A."/>
            <person name="Hayashi K."/>
            <person name="Sato H."/>
            <person name="Nagai K."/>
            <person name="Kimura K."/>
            <person name="Makita H."/>
            <person name="Sekine M."/>
            <person name="Obayashi M."/>
            <person name="Nishi T."/>
            <person name="Shibahara T."/>
            <person name="Tanaka T."/>
            <person name="Ishii S."/>
            <person name="Yamamoto J."/>
            <person name="Saito K."/>
            <person name="Kawai Y."/>
            <person name="Isono Y."/>
            <person name="Nakamura Y."/>
            <person name="Nagahari K."/>
            <person name="Murakami K."/>
            <person name="Yasuda T."/>
            <person name="Iwayanagi T."/>
            <person name="Wagatsuma M."/>
            <person name="Shiratori A."/>
            <person name="Sudo H."/>
            <person name="Hosoiri T."/>
            <person name="Kaku Y."/>
            <person name="Kodaira H."/>
            <person name="Kondo H."/>
            <person name="Sugawara M."/>
            <person name="Takahashi M."/>
            <person name="Kanda K."/>
            <person name="Yokoi T."/>
            <person name="Furuya T."/>
            <person name="Kikkawa E."/>
            <person name="Omura Y."/>
            <person name="Abe K."/>
            <person name="Kamihara K."/>
            <person name="Katsuta N."/>
            <person name="Sato K."/>
            <person name="Tanikawa M."/>
            <person name="Yamazaki M."/>
            <person name="Ninomiya K."/>
            <person name="Ishibashi T."/>
            <person name="Yamashita H."/>
            <person name="Murakawa K."/>
            <person name="Fujimori K."/>
            <person name="Tanai H."/>
            <person name="Kimata M."/>
            <person name="Watanabe M."/>
            <person name="Hiraoka S."/>
            <person name="Chiba Y."/>
            <person name="Ishida S."/>
            <person name="Ono Y."/>
            <person name="Takiguchi S."/>
            <person name="Watanabe S."/>
            <person name="Yosida M."/>
            <person name="Hotuta T."/>
            <person name="Kusano J."/>
            <person name="Kanehori K."/>
            <person name="Takahashi-Fujii A."/>
            <person name="Hara H."/>
            <person name="Tanase T.-O."/>
            <person name="Nomura Y."/>
            <person name="Togiya S."/>
            <person name="Komai F."/>
            <person name="Hara R."/>
            <person name="Takeuchi K."/>
            <person name="Arita M."/>
            <person name="Imose N."/>
            <person name="Musashino K."/>
            <person name="Yuuki H."/>
            <person name="Oshima A."/>
            <person name="Sasaki N."/>
            <person name="Aotsuka S."/>
            <person name="Yoshikawa Y."/>
            <person name="Matsunawa H."/>
            <person name="Ichihara T."/>
            <person name="Shiohata N."/>
            <person name="Sano S."/>
            <person name="Moriya S."/>
            <person name="Momiyama H."/>
            <person name="Satoh N."/>
            <person name="Takami S."/>
            <person name="Terashima Y."/>
            <person name="Suzuki O."/>
            <person name="Nakagawa S."/>
            <person name="Senoh A."/>
            <person name="Mizoguchi H."/>
            <person name="Goto Y."/>
            <person name="Shimizu F."/>
            <person name="Wakebe H."/>
            <person name="Hishigaki H."/>
            <person name="Watanabe T."/>
            <person name="Sugiyama A."/>
            <person name="Takemoto M."/>
            <person name="Kawakami B."/>
            <person name="Yamazaki M."/>
            <person name="Watanabe K."/>
            <person name="Kumagai A."/>
            <person name="Itakura S."/>
            <person name="Fukuzumi Y."/>
            <person name="Fujimori Y."/>
            <person name="Komiyama M."/>
            <person name="Tashiro H."/>
            <person name="Tanigami A."/>
            <person name="Fujiwara T."/>
            <person name="Ono T."/>
            <person name="Yamada K."/>
            <person name="Fujii Y."/>
            <person name="Ozaki K."/>
            <person name="Hirao M."/>
            <person name="Ohmori Y."/>
            <person name="Kawabata A."/>
            <person name="Hikiji T."/>
            <person name="Kobatake N."/>
            <person name="Inagaki H."/>
            <person name="Ikema Y."/>
            <person name="Okamoto S."/>
            <person name="Okitani R."/>
            <person name="Kawakami T."/>
            <person name="Noguchi S."/>
            <person name="Itoh T."/>
            <person name="Shigeta K."/>
            <person name="Senba T."/>
            <person name="Matsumura K."/>
            <person name="Nakajima Y."/>
            <person name="Mizuno T."/>
            <person name="Morinaga M."/>
            <person name="Sasaki M."/>
            <person name="Togashi T."/>
            <person name="Oyama M."/>
            <person name="Hata H."/>
            <person name="Watanabe M."/>
            <person name="Komatsu T."/>
            <person name="Mizushima-Sugano J."/>
            <person name="Satoh T."/>
            <person name="Shirai Y."/>
            <person name="Takahashi Y."/>
            <person name="Nakagawa K."/>
            <person name="Okumura K."/>
            <person name="Nagase T."/>
            <person name="Nomura N."/>
            <person name="Kikuchi H."/>
            <person name="Masuho Y."/>
            <person name="Yamashita R."/>
            <person name="Nakai K."/>
            <person name="Yada T."/>
            <person name="Nakamura Y."/>
            <person name="Ohara O."/>
            <person name="Isogai T."/>
            <person name="Sugano S."/>
        </authorList>
    </citation>
    <scope>NUCLEOTIDE SEQUENCE [LARGE SCALE MRNA]</scope>
    <scope>VARIANTS GLY-348; ARG-569; ALA-640 AND THR-715</scope>
    <source>
        <tissue>Kidney proximal tubule</tissue>
        <tissue>Testis</tissue>
        <tissue>Trachea</tissue>
    </source>
</reference>
<reference key="2">
    <citation type="journal article" date="2006" name="Nature">
        <title>The DNA sequence, annotation and analysis of human chromosome 3.</title>
        <authorList>
            <person name="Muzny D.M."/>
            <person name="Scherer S.E."/>
            <person name="Kaul R."/>
            <person name="Wang J."/>
            <person name="Yu J."/>
            <person name="Sudbrak R."/>
            <person name="Buhay C.J."/>
            <person name="Chen R."/>
            <person name="Cree A."/>
            <person name="Ding Y."/>
            <person name="Dugan-Rocha S."/>
            <person name="Gill R."/>
            <person name="Gunaratne P."/>
            <person name="Harris R.A."/>
            <person name="Hawes A.C."/>
            <person name="Hernandez J."/>
            <person name="Hodgson A.V."/>
            <person name="Hume J."/>
            <person name="Jackson A."/>
            <person name="Khan Z.M."/>
            <person name="Kovar-Smith C."/>
            <person name="Lewis L.R."/>
            <person name="Lozado R.J."/>
            <person name="Metzker M.L."/>
            <person name="Milosavljevic A."/>
            <person name="Miner G.R."/>
            <person name="Morgan M.B."/>
            <person name="Nazareth L.V."/>
            <person name="Scott G."/>
            <person name="Sodergren E."/>
            <person name="Song X.-Z."/>
            <person name="Steffen D."/>
            <person name="Wei S."/>
            <person name="Wheeler D.A."/>
            <person name="Wright M.W."/>
            <person name="Worley K.C."/>
            <person name="Yuan Y."/>
            <person name="Zhang Z."/>
            <person name="Adams C.Q."/>
            <person name="Ansari-Lari M.A."/>
            <person name="Ayele M."/>
            <person name="Brown M.J."/>
            <person name="Chen G."/>
            <person name="Chen Z."/>
            <person name="Clendenning J."/>
            <person name="Clerc-Blankenburg K.P."/>
            <person name="Chen R."/>
            <person name="Chen Z."/>
            <person name="Davis C."/>
            <person name="Delgado O."/>
            <person name="Dinh H.H."/>
            <person name="Dong W."/>
            <person name="Draper H."/>
            <person name="Ernst S."/>
            <person name="Fu G."/>
            <person name="Gonzalez-Garay M.L."/>
            <person name="Garcia D.K."/>
            <person name="Gillett W."/>
            <person name="Gu J."/>
            <person name="Hao B."/>
            <person name="Haugen E."/>
            <person name="Havlak P."/>
            <person name="He X."/>
            <person name="Hennig S."/>
            <person name="Hu S."/>
            <person name="Huang W."/>
            <person name="Jackson L.R."/>
            <person name="Jacob L.S."/>
            <person name="Kelly S.H."/>
            <person name="Kube M."/>
            <person name="Levy R."/>
            <person name="Li Z."/>
            <person name="Liu B."/>
            <person name="Liu J."/>
            <person name="Liu W."/>
            <person name="Lu J."/>
            <person name="Maheshwari M."/>
            <person name="Nguyen B.-V."/>
            <person name="Okwuonu G.O."/>
            <person name="Palmeiri A."/>
            <person name="Pasternak S."/>
            <person name="Perez L.M."/>
            <person name="Phelps K.A."/>
            <person name="Plopper F.J."/>
            <person name="Qiang B."/>
            <person name="Raymond C."/>
            <person name="Rodriguez R."/>
            <person name="Saenphimmachak C."/>
            <person name="Santibanez J."/>
            <person name="Shen H."/>
            <person name="Shen Y."/>
            <person name="Subramanian S."/>
            <person name="Tabor P.E."/>
            <person name="Verduzco D."/>
            <person name="Waldron L."/>
            <person name="Wang J."/>
            <person name="Wang J."/>
            <person name="Wang Q."/>
            <person name="Williams G.A."/>
            <person name="Wong G.K.-S."/>
            <person name="Yao Z."/>
            <person name="Zhang J."/>
            <person name="Zhang X."/>
            <person name="Zhao G."/>
            <person name="Zhou J."/>
            <person name="Zhou Y."/>
            <person name="Nelson D."/>
            <person name="Lehrach H."/>
            <person name="Reinhardt R."/>
            <person name="Naylor S.L."/>
            <person name="Yang H."/>
            <person name="Olson M."/>
            <person name="Weinstock G."/>
            <person name="Gibbs R.A."/>
        </authorList>
    </citation>
    <scope>NUCLEOTIDE SEQUENCE [LARGE SCALE GENOMIC DNA]</scope>
</reference>
<reference key="3">
    <citation type="journal article" date="2004" name="Genome Res.">
        <title>The status, quality, and expansion of the NIH full-length cDNA project: the Mammalian Gene Collection (MGC).</title>
        <authorList>
            <consortium name="The MGC Project Team"/>
        </authorList>
    </citation>
    <scope>NUCLEOTIDE SEQUENCE [LARGE SCALE MRNA] OF 1-580 AND 985-1275</scope>
    <source>
        <tissue>Brain</tissue>
        <tissue>Lymph</tissue>
    </source>
</reference>
<reference key="4">
    <citation type="journal article" date="2007" name="BMC Genomics">
        <title>The full-ORF clone resource of the German cDNA consortium.</title>
        <authorList>
            <person name="Bechtel S."/>
            <person name="Rosenfelder H."/>
            <person name="Duda A."/>
            <person name="Schmidt C.P."/>
            <person name="Ernst U."/>
            <person name="Wellenreuther R."/>
            <person name="Mehrle A."/>
            <person name="Schuster C."/>
            <person name="Bahr A."/>
            <person name="Bloecker H."/>
            <person name="Heubner D."/>
            <person name="Hoerlein A."/>
            <person name="Michel G."/>
            <person name="Wedler H."/>
            <person name="Koehrer K."/>
            <person name="Ottenwaelder B."/>
            <person name="Poustka A."/>
            <person name="Wiemann S."/>
            <person name="Schupp I."/>
        </authorList>
    </citation>
    <scope>NUCLEOTIDE SEQUENCE [LARGE SCALE MRNA] OF 953-1275</scope>
    <source>
        <tissue>Testis</tissue>
    </source>
</reference>
<reference key="5">
    <citation type="journal article" date="2008" name="Proc. Natl. Acad. Sci. U.S.A.">
        <title>A quantitative atlas of mitotic phosphorylation.</title>
        <authorList>
            <person name="Dephoure N."/>
            <person name="Zhou C."/>
            <person name="Villen J."/>
            <person name="Beausoleil S.A."/>
            <person name="Bakalarski C.E."/>
            <person name="Elledge S.J."/>
            <person name="Gygi S.P."/>
        </authorList>
    </citation>
    <scope>IDENTIFICATION BY MASS SPECTROMETRY [LARGE SCALE ANALYSIS]</scope>
    <source>
        <tissue>Cervix carcinoma</tissue>
    </source>
</reference>
<reference key="6">
    <citation type="journal article" date="2014" name="J. Cell Sci.">
        <title>Recurrent deletions of ULK4 in schizophrenia: a gene crucial for neuritogenesis and neuronal motility.</title>
        <authorList>
            <person name="Lang B."/>
            <person name="Pu J."/>
            <person name="Hunter I."/>
            <person name="Liu M."/>
            <person name="Martin-Granados C."/>
            <person name="Reilly T.J."/>
            <person name="Gao G.D."/>
            <person name="Guan Z.L."/>
            <person name="Li W.D."/>
            <person name="Shi Y.Y."/>
            <person name="He G."/>
            <person name="He L."/>
            <person name="Stefansson H."/>
            <person name="St Clair D."/>
            <person name="Blackwood D.H."/>
            <person name="McCaig C.D."/>
            <person name="Shen S."/>
        </authorList>
    </citation>
    <scope>INVOLVEMENT IN SCHIZOPHRENIA</scope>
    <scope>FUNCTION</scope>
    <scope>TISSUE SPECIFICITY</scope>
    <scope>INDUCTION BY RETINOIC ACID</scope>
</reference>
<reference key="7">
    <citation type="journal article" date="2007" name="Nature">
        <title>Patterns of somatic mutation in human cancer genomes.</title>
        <authorList>
            <person name="Greenman C."/>
            <person name="Stephens P."/>
            <person name="Smith R."/>
            <person name="Dalgliesh G.L."/>
            <person name="Hunter C."/>
            <person name="Bignell G."/>
            <person name="Davies H."/>
            <person name="Teague J."/>
            <person name="Butler A."/>
            <person name="Stevens C."/>
            <person name="Edkins S."/>
            <person name="O'Meara S."/>
            <person name="Vastrik I."/>
            <person name="Schmidt E.E."/>
            <person name="Avis T."/>
            <person name="Barthorpe S."/>
            <person name="Bhamra G."/>
            <person name="Buck G."/>
            <person name="Choudhury B."/>
            <person name="Clements J."/>
            <person name="Cole J."/>
            <person name="Dicks E."/>
            <person name="Forbes S."/>
            <person name="Gray K."/>
            <person name="Halliday K."/>
            <person name="Harrison R."/>
            <person name="Hills K."/>
            <person name="Hinton J."/>
            <person name="Jenkinson A."/>
            <person name="Jones D."/>
            <person name="Menzies A."/>
            <person name="Mironenko T."/>
            <person name="Perry J."/>
            <person name="Raine K."/>
            <person name="Richardson D."/>
            <person name="Shepherd R."/>
            <person name="Small A."/>
            <person name="Tofts C."/>
            <person name="Varian J."/>
            <person name="Webb T."/>
            <person name="West S."/>
            <person name="Widaa S."/>
            <person name="Yates A."/>
            <person name="Cahill D.P."/>
            <person name="Louis D.N."/>
            <person name="Goldstraw P."/>
            <person name="Nicholson A.G."/>
            <person name="Brasseur F."/>
            <person name="Looijenga L."/>
            <person name="Weber B.L."/>
            <person name="Chiew Y.-E."/>
            <person name="DeFazio A."/>
            <person name="Greaves M.F."/>
            <person name="Green A.R."/>
            <person name="Campbell P."/>
            <person name="Birney E."/>
            <person name="Easton D.F."/>
            <person name="Chenevix-Trench G."/>
            <person name="Tan M.-H."/>
            <person name="Khoo S.K."/>
            <person name="Teh B.T."/>
            <person name="Yuen S.T."/>
            <person name="Leung S.Y."/>
            <person name="Wooster R."/>
            <person name="Futreal P.A."/>
            <person name="Stratton M.R."/>
        </authorList>
    </citation>
    <scope>VARIANTS [LARGE SCALE ANALYSIS] ALA-18; ARG-39; LYS-139; ASN-223; GLY-348; MET-415 AND PRO-417</scope>
</reference>
<organism>
    <name type="scientific">Homo sapiens</name>
    <name type="common">Human</name>
    <dbReference type="NCBI Taxonomy" id="9606"/>
    <lineage>
        <taxon>Eukaryota</taxon>
        <taxon>Metazoa</taxon>
        <taxon>Chordata</taxon>
        <taxon>Craniata</taxon>
        <taxon>Vertebrata</taxon>
        <taxon>Euteleostomi</taxon>
        <taxon>Mammalia</taxon>
        <taxon>Eutheria</taxon>
        <taxon>Euarchontoglires</taxon>
        <taxon>Primates</taxon>
        <taxon>Haplorrhini</taxon>
        <taxon>Catarrhini</taxon>
        <taxon>Hominidae</taxon>
        <taxon>Homo</taxon>
    </lineage>
</organism>
<sequence>MENFILYEEIGRGSKTVVYKGRRKGTINFVAILCTDKCKRPEITNWVRLTREIKHKNIVTFHEWYETSNHLWLVVELCTGGSLKTVIAQDENLPEDVVREFGIDLISGLHHLHKLGILFCDISPRKILLEGPGTLKFSNFCLAKVEGENLEEFFALVAAEEGGGDNGENVLKKSMKSRVKGSPVYTAPEVVRGADFSISSDLWSLGCLLYEMFSGKPPFFSESISELTEKILCEDPLPPIPKDSSRPKASSDFINLLDGLLQRDPQKRLTWTRLLQHSFWKKAFAGADQESSVEDLSLSRNTMECSGPQDSKELLQNSQSRQAKGHKSGQPLGHSFRLENPTEFRPKSTLEGQLNESMFLLSSRPTPRTSTAVEVSPGEDMTHCSPQKTSPLTKITSGHLSQQDLESQMRELIYTDSDLVVTPIIDNPKIMKQPPVKFDAKILHLPTYSVDKLLFLKDQDWNDFLQQVCSQIDSTEKSMGASRAKLNLLCYLCVVAGHQEVATRLLHSPLFQLLIQHLRIAPNWDIRAKVAHVIGLLASHTAELQENTPVVEAIVLLTELIRENFRNSKLKQCLLPTLGELIYLVATQEEKKKNPRECWAVPLAAYTVLMRCLREGEERVVNHMAAKIIENVCTTFSAQSQGFITGEIGPILWYLFRHSTADSLRITAVSALCRITRHSPTAFQNVIEKVGLNSVINSLASAICKVQQYMLTLFAAMLSCGIHLQRLIQEKGFVSTIIRLLDSPSTCIRAKAFLVLLYILIYNREMLLLSCQARLVMYIERDSRKTTPGKEQQSGNEYLSKCLDLLICHIVQELPRILGDILNSLANVSGRKHPSTVQVKQLKLCLPLMPVVLHLVTSQVFRPQVVTEEFLFSYGTILSHIKSVDSGETNIDGAIGLTASEEFIKITLSAFEAIIQYPILLKDYRSTVVDYILPPLVSLVQSQNVEWRLFSLRLLSETTSLLVNQEFGDGKEKASVDSDSNLLALIRDVLLPQYEHILLEPDPVPAYALKLLVAMTEHNPTFTRLVEESKLIPLIFEVTLEHQESILGNTMQSVIALLSNLVACKDSNMELLYEQGLVSHICNLLTETATLCLDVDNKNNNEMAAPLLFSLLDILHSMLTYTSGIVRLALQAQKSGSGEDPQAAEDLLLLNRPLTDLISLLIPLLPNEDPEIFDVSSKCLSILVQLYGGENPDSLSPENVEIFAHLLTSKEDPKEQKLLLRILRRMITSNEKHLESLKNAGSLLRALERLAPGSGSFADSAVAPLALEILQAVGH</sequence>
<feature type="chain" id="PRO_0000260154" description="Serine/threonine-protein kinase ULK4">
    <location>
        <begin position="1"/>
        <end position="1275"/>
    </location>
</feature>
<feature type="domain" description="Protein kinase" evidence="1">
    <location>
        <begin position="4"/>
        <end position="280"/>
    </location>
</feature>
<feature type="repeat" description="HEAT 1">
    <location>
        <begin position="842"/>
        <end position="880"/>
    </location>
</feature>
<feature type="repeat" description="HEAT 2">
    <location>
        <begin position="926"/>
        <end position="964"/>
    </location>
</feature>
<feature type="repeat" description="HEAT 3">
    <location>
        <begin position="1025"/>
        <end position="1063"/>
    </location>
</feature>
<feature type="repeat" description="HEAT 4">
    <location>
        <begin position="1151"/>
        <end position="1189"/>
    </location>
</feature>
<feature type="repeat" description="HEAT 5">
    <location>
        <begin position="1213"/>
        <end position="1253"/>
    </location>
</feature>
<feature type="region of interest" description="Disordered" evidence="2">
    <location>
        <begin position="299"/>
        <end position="350"/>
    </location>
</feature>
<feature type="region of interest" description="Disordered" evidence="2">
    <location>
        <begin position="364"/>
        <end position="392"/>
    </location>
</feature>
<feature type="compositionally biased region" description="Basic and acidic residues" evidence="2">
    <location>
        <begin position="336"/>
        <end position="348"/>
    </location>
</feature>
<feature type="compositionally biased region" description="Polar residues" evidence="2">
    <location>
        <begin position="364"/>
        <end position="373"/>
    </location>
</feature>
<feature type="sequence variant" id="VAR_041286" description="In dbSNP:rs34538622." evidence="4">
    <original>V</original>
    <variation>A</variation>
    <location>
        <position position="18"/>
    </location>
</feature>
<feature type="sequence variant" id="VAR_041287" description="In dbSNP:rs2272007." evidence="4">
    <original>K</original>
    <variation>R</variation>
    <location>
        <position position="39"/>
    </location>
</feature>
<feature type="sequence variant" id="VAR_041288" description="In dbSNP:rs35833603." evidence="4">
    <original>N</original>
    <variation>K</variation>
    <location>
        <position position="139"/>
    </location>
</feature>
<feature type="sequence variant" id="VAR_041289" description="In dbSNP:rs55840267." evidence="4">
    <original>S</original>
    <variation>N</variation>
    <location>
        <position position="223"/>
    </location>
</feature>
<feature type="sequence variant" id="VAR_051679" description="In dbSNP:rs1716975.">
    <original>I</original>
    <variation>V</variation>
    <location>
        <position position="224"/>
    </location>
</feature>
<feature type="sequence variant" id="VAR_041290" description="In dbSNP:rs35263917." evidence="3 4">
    <original>S</original>
    <variation>G</variation>
    <location>
        <position position="348"/>
    </location>
</feature>
<feature type="sequence variant" id="VAR_041291" description="In dbSNP:rs371185820." evidence="4">
    <original>T</original>
    <variation>M</variation>
    <location>
        <position position="415"/>
    </location>
</feature>
<feature type="sequence variant" id="VAR_041292" description="In dbSNP:rs75907560." evidence="4">
    <original>S</original>
    <variation>P</variation>
    <location>
        <position position="417"/>
    </location>
</feature>
<feature type="sequence variant" id="VAR_029005" description="In dbSNP:rs1052501.">
    <original>A</original>
    <variation>T</variation>
    <location>
        <position position="542"/>
    </location>
</feature>
<feature type="sequence variant" id="VAR_029006" description="In dbSNP:rs3774372.">
    <original>K</original>
    <variation>R</variation>
    <location>
        <position position="569"/>
    </location>
</feature>
<feature type="sequence variant" id="VAR_029007" description="In dbSNP:rs17063572.">
    <original>L</original>
    <variation>S</variation>
    <location>
        <position position="603"/>
    </location>
</feature>
<feature type="sequence variant" id="VAR_029008" description="In dbSNP:rs4973986.">
    <original>S</original>
    <variation>A</variation>
    <location>
        <position position="640"/>
    </location>
</feature>
<feature type="sequence variant" id="VAR_029009" description="In dbSNP:rs17215589.">
    <original>A</original>
    <variation>T</variation>
    <location>
        <position position="715"/>
    </location>
</feature>
<feature type="sequence variant" id="VAR_059772" description="In dbSNP:rs12488691.">
    <original>S</original>
    <variation>N</variation>
    <location>
        <position position="1260"/>
    </location>
</feature>
<feature type="sequence variant" id="VAR_051680" description="In dbSNP:rs6769117.">
    <original>A</original>
    <variation>V</variation>
    <location>
        <position position="1261"/>
    </location>
</feature>
<feature type="sequence conflict" description="In Ref. 1; BAA91270." evidence="6" ref="1">
    <original>K</original>
    <variation>E</variation>
    <location>
        <position position="388"/>
    </location>
</feature>
<feature type="sequence conflict" description="In Ref. 3; AAH14794." evidence="6" ref="3">
    <original>AIVLLTELIRENFRNSKLKQCLLPTLGE</original>
    <variation>TTSSIGIGILNCLVQHSTPVPRQCLVYV</variation>
    <location>
        <begin position="553"/>
        <end position="580"/>
    </location>
</feature>
<feature type="sequence conflict" description="In Ref. 1; BAA91270." evidence="6" ref="1">
    <original>G</original>
    <variation>V</variation>
    <location>
        <position position="732"/>
    </location>
</feature>
<feature type="sequence conflict" description="In Ref. 3; AAH40739." evidence="6" ref="3">
    <original>R</original>
    <variation>S</variation>
    <location>
        <position position="1024"/>
    </location>
</feature>
<feature type="helix" evidence="8">
    <location>
        <begin position="1"/>
        <end position="3"/>
    </location>
</feature>
<feature type="strand" evidence="8">
    <location>
        <begin position="4"/>
        <end position="13"/>
    </location>
</feature>
<feature type="strand" evidence="8">
    <location>
        <begin position="16"/>
        <end position="23"/>
    </location>
</feature>
<feature type="strand" evidence="8">
    <location>
        <begin position="29"/>
        <end position="35"/>
    </location>
</feature>
<feature type="helix" evidence="8">
    <location>
        <begin position="37"/>
        <end position="39"/>
    </location>
</feature>
<feature type="helix" evidence="8">
    <location>
        <begin position="40"/>
        <end position="50"/>
    </location>
</feature>
<feature type="strand" evidence="8">
    <location>
        <begin position="61"/>
        <end position="66"/>
    </location>
</feature>
<feature type="strand" evidence="8">
    <location>
        <begin position="71"/>
        <end position="75"/>
    </location>
</feature>
<feature type="helix" evidence="8">
    <location>
        <begin position="83"/>
        <end position="90"/>
    </location>
</feature>
<feature type="helix" evidence="8">
    <location>
        <begin position="95"/>
        <end position="114"/>
    </location>
</feature>
<feature type="helix" evidence="8">
    <location>
        <begin position="124"/>
        <end position="126"/>
    </location>
</feature>
<feature type="strand" evidence="8">
    <location>
        <begin position="127"/>
        <end position="129"/>
    </location>
</feature>
<feature type="strand" evidence="8">
    <location>
        <begin position="131"/>
        <end position="133"/>
    </location>
</feature>
<feature type="strand" evidence="8">
    <location>
        <begin position="135"/>
        <end position="137"/>
    </location>
</feature>
<feature type="helix" evidence="8">
    <location>
        <begin position="150"/>
        <end position="160"/>
    </location>
</feature>
<feature type="helix" evidence="8">
    <location>
        <begin position="174"/>
        <end position="178"/>
    </location>
</feature>
<feature type="helix" evidence="7">
    <location>
        <begin position="183"/>
        <end position="185"/>
    </location>
</feature>
<feature type="helix" evidence="8">
    <location>
        <begin position="188"/>
        <end position="191"/>
    </location>
</feature>
<feature type="helix" evidence="8">
    <location>
        <begin position="198"/>
        <end position="214"/>
    </location>
</feature>
<feature type="helix" evidence="8">
    <location>
        <begin position="224"/>
        <end position="233"/>
    </location>
</feature>
<feature type="helix" evidence="8">
    <location>
        <begin position="251"/>
        <end position="260"/>
    </location>
</feature>
<feature type="turn" evidence="8">
    <location>
        <begin position="265"/>
        <end position="267"/>
    </location>
</feature>
<feature type="helix" evidence="8">
    <location>
        <begin position="271"/>
        <end position="275"/>
    </location>
</feature>
<feature type="helix" evidence="8">
    <location>
        <begin position="278"/>
        <end position="280"/>
    </location>
</feature>
<feature type="turn" evidence="8">
    <location>
        <begin position="281"/>
        <end position="284"/>
    </location>
</feature>
<dbReference type="EC" id="2.7.11.1"/>
<dbReference type="EMBL" id="AK000581">
    <property type="protein sequence ID" value="BAA91270.1"/>
    <property type="status" value="ALT_FRAME"/>
    <property type="molecule type" value="mRNA"/>
</dbReference>
<dbReference type="EMBL" id="AK093396">
    <property type="protein sequence ID" value="BAG52707.1"/>
    <property type="status" value="ALT_INIT"/>
    <property type="molecule type" value="mRNA"/>
</dbReference>
<dbReference type="EMBL" id="AK304341">
    <property type="protein sequence ID" value="BAG65186.1"/>
    <property type="molecule type" value="mRNA"/>
</dbReference>
<dbReference type="EMBL" id="AC104305">
    <property type="status" value="NOT_ANNOTATED_CDS"/>
    <property type="molecule type" value="Genomic_DNA"/>
</dbReference>
<dbReference type="EMBL" id="BC014794">
    <property type="protein sequence ID" value="AAH14794.1"/>
    <property type="molecule type" value="mRNA"/>
</dbReference>
<dbReference type="EMBL" id="BC040739">
    <property type="protein sequence ID" value="AAH40739.1"/>
    <property type="molecule type" value="mRNA"/>
</dbReference>
<dbReference type="EMBL" id="AL133104">
    <property type="protein sequence ID" value="CAB61411.1"/>
    <property type="molecule type" value="mRNA"/>
</dbReference>
<dbReference type="CCDS" id="CCDS43071.1"/>
<dbReference type="PIR" id="T42683">
    <property type="entry name" value="T42683"/>
</dbReference>
<dbReference type="RefSeq" id="NP_060356.2">
    <property type="nucleotide sequence ID" value="NM_017886.4"/>
</dbReference>
<dbReference type="PDB" id="6TSZ">
    <property type="method" value="X-ray"/>
    <property type="resolution" value="1.90 A"/>
    <property type="chains" value="U=2-288"/>
</dbReference>
<dbReference type="PDB" id="6U5L">
    <property type="method" value="X-ray"/>
    <property type="resolution" value="1.75 A"/>
    <property type="chains" value="A=1-285"/>
</dbReference>
<dbReference type="PDBsum" id="6TSZ"/>
<dbReference type="PDBsum" id="6U5L"/>
<dbReference type="SMR" id="Q96C45"/>
<dbReference type="BioGRID" id="120321">
    <property type="interactions" value="27"/>
</dbReference>
<dbReference type="FunCoup" id="Q96C45">
    <property type="interactions" value="1077"/>
</dbReference>
<dbReference type="IntAct" id="Q96C45">
    <property type="interactions" value="19"/>
</dbReference>
<dbReference type="STRING" id="9606.ENSP00000301831"/>
<dbReference type="iPTMnet" id="Q96C45"/>
<dbReference type="PhosphoSitePlus" id="Q96C45"/>
<dbReference type="BioMuta" id="ULK4"/>
<dbReference type="DMDM" id="118574241"/>
<dbReference type="CPTAC" id="non-CPTAC-6008"/>
<dbReference type="CPTAC" id="non-CPTAC-6009"/>
<dbReference type="jPOST" id="Q96C45"/>
<dbReference type="MassIVE" id="Q96C45"/>
<dbReference type="PaxDb" id="9606-ENSP00000301831"/>
<dbReference type="PeptideAtlas" id="Q96C45"/>
<dbReference type="ProteomicsDB" id="76159"/>
<dbReference type="Antibodypedia" id="6576">
    <property type="antibodies" value="126 antibodies from 28 providers"/>
</dbReference>
<dbReference type="DNASU" id="54986"/>
<dbReference type="Ensembl" id="ENST00000301831.9">
    <property type="protein sequence ID" value="ENSP00000301831.4"/>
    <property type="gene ID" value="ENSG00000168038.11"/>
</dbReference>
<dbReference type="GeneID" id="54986"/>
<dbReference type="KEGG" id="hsa:54986"/>
<dbReference type="MANE-Select" id="ENST00000301831.9">
    <property type="protein sequence ID" value="ENSP00000301831.4"/>
    <property type="RefSeq nucleotide sequence ID" value="NM_017886.4"/>
    <property type="RefSeq protein sequence ID" value="NP_060356.2"/>
</dbReference>
<dbReference type="UCSC" id="uc003ckv.5">
    <property type="organism name" value="human"/>
</dbReference>
<dbReference type="AGR" id="HGNC:15784"/>
<dbReference type="CTD" id="54986"/>
<dbReference type="DisGeNET" id="54986"/>
<dbReference type="GeneCards" id="ULK4"/>
<dbReference type="HGNC" id="HGNC:15784">
    <property type="gene designation" value="ULK4"/>
</dbReference>
<dbReference type="HPA" id="ENSG00000168038">
    <property type="expression patterns" value="Tissue enhanced (testis)"/>
</dbReference>
<dbReference type="MalaCards" id="ULK4"/>
<dbReference type="MIM" id="617010">
    <property type="type" value="gene"/>
</dbReference>
<dbReference type="neXtProt" id="NX_Q96C45"/>
<dbReference type="OpenTargets" id="ENSG00000168038"/>
<dbReference type="PharmGKB" id="PA134978836"/>
<dbReference type="VEuPathDB" id="HostDB:ENSG00000168038"/>
<dbReference type="eggNOG" id="KOG0597">
    <property type="taxonomic scope" value="Eukaryota"/>
</dbReference>
<dbReference type="GeneTree" id="ENSGT00940000156541"/>
<dbReference type="HOGENOM" id="CLU_002110_0_0_1"/>
<dbReference type="InParanoid" id="Q96C45"/>
<dbReference type="OMA" id="NWYETNN"/>
<dbReference type="OrthoDB" id="24822at2759"/>
<dbReference type="PAN-GO" id="Q96C45">
    <property type="GO annotations" value="0 GO annotations based on evolutionary models"/>
</dbReference>
<dbReference type="PhylomeDB" id="Q96C45"/>
<dbReference type="TreeFam" id="TF332678"/>
<dbReference type="PathwayCommons" id="Q96C45"/>
<dbReference type="SignaLink" id="Q96C45"/>
<dbReference type="BioGRID-ORCS" id="54986">
    <property type="hits" value="14 hits in 1190 CRISPR screens"/>
</dbReference>
<dbReference type="ChiTaRS" id="ULK4">
    <property type="organism name" value="human"/>
</dbReference>
<dbReference type="GenomeRNAi" id="54986"/>
<dbReference type="Pharos" id="Q96C45">
    <property type="development level" value="Tbio"/>
</dbReference>
<dbReference type="PRO" id="PR:Q96C45"/>
<dbReference type="Proteomes" id="UP000005640">
    <property type="component" value="Chromosome 3"/>
</dbReference>
<dbReference type="RNAct" id="Q96C45">
    <property type="molecule type" value="protein"/>
</dbReference>
<dbReference type="Bgee" id="ENSG00000168038">
    <property type="expression patterns" value="Expressed in decidua and 139 other cell types or tissues"/>
</dbReference>
<dbReference type="ExpressionAtlas" id="Q96C45">
    <property type="expression patterns" value="baseline and differential"/>
</dbReference>
<dbReference type="GO" id="GO:0005524">
    <property type="term" value="F:ATP binding"/>
    <property type="evidence" value="ECO:0007669"/>
    <property type="project" value="UniProtKB-KW"/>
</dbReference>
<dbReference type="GO" id="GO:0106310">
    <property type="term" value="F:protein serine kinase activity"/>
    <property type="evidence" value="ECO:0007669"/>
    <property type="project" value="RHEA"/>
</dbReference>
<dbReference type="GO" id="GO:0004674">
    <property type="term" value="F:protein serine/threonine kinase activity"/>
    <property type="evidence" value="ECO:0007669"/>
    <property type="project" value="UniProtKB-KW"/>
</dbReference>
<dbReference type="GO" id="GO:0000226">
    <property type="term" value="P:microtubule cytoskeleton organization"/>
    <property type="evidence" value="ECO:0000315"/>
    <property type="project" value="MGI"/>
</dbReference>
<dbReference type="GO" id="GO:0042313">
    <property type="term" value="P:protein kinase C deactivation"/>
    <property type="evidence" value="ECO:0000315"/>
    <property type="project" value="MGI"/>
</dbReference>
<dbReference type="GO" id="GO:0046328">
    <property type="term" value="P:regulation of JNK cascade"/>
    <property type="evidence" value="ECO:0000315"/>
    <property type="project" value="MGI"/>
</dbReference>
<dbReference type="GO" id="GO:0043408">
    <property type="term" value="P:regulation of MAPK cascade"/>
    <property type="evidence" value="ECO:0000315"/>
    <property type="project" value="MGI"/>
</dbReference>
<dbReference type="GO" id="GO:2001222">
    <property type="term" value="P:regulation of neuron migration"/>
    <property type="evidence" value="ECO:0000315"/>
    <property type="project" value="MGI"/>
</dbReference>
<dbReference type="GO" id="GO:0010975">
    <property type="term" value="P:regulation of neuron projection development"/>
    <property type="evidence" value="ECO:0000315"/>
    <property type="project" value="MGI"/>
</dbReference>
<dbReference type="GO" id="GO:1900744">
    <property type="term" value="P:regulation of p38MAPK cascade"/>
    <property type="evidence" value="ECO:0000315"/>
    <property type="project" value="MGI"/>
</dbReference>
<dbReference type="CDD" id="cd14010">
    <property type="entry name" value="STKc_ULK4"/>
    <property type="match status" value="1"/>
</dbReference>
<dbReference type="FunFam" id="1.10.510.10:FF:000686">
    <property type="entry name" value="Serine/threonine-protein kinase ULK4"/>
    <property type="match status" value="1"/>
</dbReference>
<dbReference type="FunFam" id="1.25.10.10:FF:000231">
    <property type="entry name" value="serine/threonine-protein kinase ULK4 isoform X1"/>
    <property type="match status" value="1"/>
</dbReference>
<dbReference type="Gene3D" id="1.25.10.10">
    <property type="entry name" value="Leucine-rich Repeat Variant"/>
    <property type="match status" value="2"/>
</dbReference>
<dbReference type="Gene3D" id="1.10.510.10">
    <property type="entry name" value="Transferase(Phosphotransferase) domain 1"/>
    <property type="match status" value="1"/>
</dbReference>
<dbReference type="InterPro" id="IPR011989">
    <property type="entry name" value="ARM-like"/>
</dbReference>
<dbReference type="InterPro" id="IPR016024">
    <property type="entry name" value="ARM-type_fold"/>
</dbReference>
<dbReference type="InterPro" id="IPR056981">
    <property type="entry name" value="HEAT_ULK4_RUNKEL"/>
</dbReference>
<dbReference type="InterPro" id="IPR011009">
    <property type="entry name" value="Kinase-like_dom_sf"/>
</dbReference>
<dbReference type="InterPro" id="IPR000719">
    <property type="entry name" value="Prot_kinase_dom"/>
</dbReference>
<dbReference type="InterPro" id="IPR045906">
    <property type="entry name" value="ULK4"/>
</dbReference>
<dbReference type="PANTHER" id="PTHR46240">
    <property type="entry name" value="SER/THR PROTEIN KINASE ULK4"/>
    <property type="match status" value="1"/>
</dbReference>
<dbReference type="PANTHER" id="PTHR46240:SF1">
    <property type="entry name" value="SERINE_THREONINE-PROTEIN KINASE ULK4"/>
    <property type="match status" value="1"/>
</dbReference>
<dbReference type="Pfam" id="PF23606">
    <property type="entry name" value="HEAT_ULK4"/>
    <property type="match status" value="1"/>
</dbReference>
<dbReference type="Pfam" id="PF00069">
    <property type="entry name" value="Pkinase"/>
    <property type="match status" value="1"/>
</dbReference>
<dbReference type="SUPFAM" id="SSF48371">
    <property type="entry name" value="ARM repeat"/>
    <property type="match status" value="1"/>
</dbReference>
<dbReference type="SUPFAM" id="SSF56112">
    <property type="entry name" value="Protein kinase-like (PK-like)"/>
    <property type="match status" value="1"/>
</dbReference>
<dbReference type="PROSITE" id="PS50011">
    <property type="entry name" value="PROTEIN_KINASE_DOM"/>
    <property type="match status" value="1"/>
</dbReference>
<comment type="function">
    <text evidence="5">May be involved in the remodeling of cytoskeletal components, such as alpha-tubulin, and in this way regulates neurite branching and elongation, as well as cell motility.</text>
</comment>
<comment type="catalytic activity">
    <reaction>
        <text>L-seryl-[protein] + ATP = O-phospho-L-seryl-[protein] + ADP + H(+)</text>
        <dbReference type="Rhea" id="RHEA:17989"/>
        <dbReference type="Rhea" id="RHEA-COMP:9863"/>
        <dbReference type="Rhea" id="RHEA-COMP:11604"/>
        <dbReference type="ChEBI" id="CHEBI:15378"/>
        <dbReference type="ChEBI" id="CHEBI:29999"/>
        <dbReference type="ChEBI" id="CHEBI:30616"/>
        <dbReference type="ChEBI" id="CHEBI:83421"/>
        <dbReference type="ChEBI" id="CHEBI:456216"/>
        <dbReference type="EC" id="2.7.11.1"/>
    </reaction>
</comment>
<comment type="catalytic activity">
    <reaction>
        <text>L-threonyl-[protein] + ATP = O-phospho-L-threonyl-[protein] + ADP + H(+)</text>
        <dbReference type="Rhea" id="RHEA:46608"/>
        <dbReference type="Rhea" id="RHEA-COMP:11060"/>
        <dbReference type="Rhea" id="RHEA-COMP:11605"/>
        <dbReference type="ChEBI" id="CHEBI:15378"/>
        <dbReference type="ChEBI" id="CHEBI:30013"/>
        <dbReference type="ChEBI" id="CHEBI:30616"/>
        <dbReference type="ChEBI" id="CHEBI:61977"/>
        <dbReference type="ChEBI" id="CHEBI:456216"/>
        <dbReference type="EC" id="2.7.11.1"/>
    </reaction>
</comment>
<comment type="interaction">
    <interactant intactId="EBI-3922541">
        <id>Q96C45</id>
    </interactant>
    <interactant intactId="EBI-2838246">
        <id>Q6AI12</id>
        <label>ANKRD40</label>
    </interactant>
    <organismsDiffer>false</organismsDiffer>
    <experiments>2</experiments>
</comment>
<comment type="interaction">
    <interactant intactId="EBI-3922541">
        <id>Q96C45</id>
    </interactant>
    <interactant intactId="EBI-863797">
        <id>Q9NRP7</id>
        <label>STK36</label>
    </interactant>
    <organismsDiffer>false</organismsDiffer>
    <experiments>4</experiments>
</comment>
<comment type="tissue specificity">
    <text evidence="5">Expressed in the brain, mainly in postmitotic neurons, including GABAergic neurons, but not in astrocytes (at protein level).</text>
</comment>
<comment type="induction">
    <text evidence="5">Up-regulated during neuronal differentiation of neuroblastoma cells treated with all-trans or 9-cis retinoic acid.</text>
</comment>
<comment type="domain">
    <text>The protein kinase domain is predicted to be catalytically inactive.</text>
</comment>
<comment type="disease">
    <text evidence="5">Various anomalies in ULK4 gene have been reported for several cases of schizophrenia, schizophrenia plus bipolar disorder and autism. ULK4 gene has been proposed to be a rare susceptibility risk factor for a range of psychiatric diseases including schizophrenia.</text>
</comment>
<comment type="similarity">
    <text evidence="1">Belongs to the protein kinase superfamily. Ser/Thr protein kinase family. APG1/unc-51/ULK1 subfamily.</text>
</comment>
<comment type="sequence caution" evidence="6">
    <conflict type="frameshift">
        <sequence resource="EMBL-CDS" id="BAA91270"/>
    </conflict>
</comment>
<comment type="sequence caution" evidence="6">
    <conflict type="erroneous initiation">
        <sequence resource="EMBL-CDS" id="BAG52707"/>
    </conflict>
    <text>Truncated N-terminus.</text>
</comment>
<protein>
    <recommendedName>
        <fullName>Serine/threonine-protein kinase ULK4</fullName>
        <ecNumber>2.7.11.1</ecNumber>
    </recommendedName>
    <alternativeName>
        <fullName>Unc-51-like kinase 4</fullName>
    </alternativeName>
</protein>
<evidence type="ECO:0000255" key="1">
    <source>
        <dbReference type="PROSITE-ProRule" id="PRU00159"/>
    </source>
</evidence>
<evidence type="ECO:0000256" key="2">
    <source>
        <dbReference type="SAM" id="MobiDB-lite"/>
    </source>
</evidence>
<evidence type="ECO:0000269" key="3">
    <source>
    </source>
</evidence>
<evidence type="ECO:0000269" key="4">
    <source>
    </source>
</evidence>
<evidence type="ECO:0000269" key="5">
    <source>
    </source>
</evidence>
<evidence type="ECO:0000305" key="6"/>
<evidence type="ECO:0007829" key="7">
    <source>
        <dbReference type="PDB" id="6TSZ"/>
    </source>
</evidence>
<evidence type="ECO:0007829" key="8">
    <source>
        <dbReference type="PDB" id="6U5L"/>
    </source>
</evidence>
<proteinExistence type="evidence at protein level"/>
<accession>Q96C45</accession>
<accession>A6NF15</accession>
<accession>B3KSE5</accession>
<accession>B4E2M4</accession>
<accession>Q8IW79</accession>
<accession>Q9NWV6</accession>
<accession>Q9UF96</accession>